<comment type="function">
    <text>Light-harvesting photosynthetic bile pigment-protein from the phycobiliprotein complex (phycobilisome, PBS). Phycocyanin is the major phycobiliprotein in the PBS rod.</text>
</comment>
<comment type="subunit">
    <text evidence="2">Heterodimer of an alpha and a beta subunit, which further assembles into trimers and the trimers into hexamers.</text>
</comment>
<comment type="subcellular location">
    <subcellularLocation>
        <location evidence="1">Cellular thylakoid membrane</location>
        <topology evidence="1">Peripheral membrane protein</topology>
        <orientation evidence="1">Cytoplasmic side</orientation>
    </subcellularLocation>
    <text evidence="1">Part of the phycobilisome rod.</text>
</comment>
<comment type="PTM">
    <text evidence="1 2">Contains two covalently linked bilin chromophores.</text>
</comment>
<comment type="similarity">
    <text evidence="3">Belongs to the phycobiliprotein family.</text>
</comment>
<accession>P27289</accession>
<accession>A5GIZ1</accession>
<proteinExistence type="inferred from homology"/>
<reference key="1">
    <citation type="journal article" date="1991" name="Plant Mol. Biol.">
        <title>Cloning and sequence analysis of the phycocyanin genes of the marine cyanobacterium Synechococcus sp. WH7803.</title>
        <authorList>
            <person name="Wilson W.H."/>
            <person name="Newman J."/>
            <person name="Mann N.H."/>
            <person name="Carr N.G."/>
        </authorList>
    </citation>
    <scope>NUCLEOTIDE SEQUENCE [GENOMIC DNA]</scope>
</reference>
<reference key="2">
    <citation type="submission" date="2006-05" db="EMBL/GenBank/DDBJ databases">
        <authorList>
            <consortium name="Genoscope"/>
        </authorList>
    </citation>
    <scope>NUCLEOTIDE SEQUENCE [LARGE SCALE GENOMIC DNA]</scope>
    <source>
        <strain>WH7803</strain>
    </source>
</reference>
<sequence length="172" mass="17909">MFDAFTKVVAQADARGQFISASEIDALAAMVSDSNKRLDAVNRISSNASTIVASAARQLFAQQPSLIAPGGNAYTSRRMAACLRDMEIILRYVTYASFAGDASVLEDRCLNGLRETYLALGTPGASVAAGVNLMKESALAIVNDRAGISAGDCASLSSEIGTYFDRAAAAVA</sequence>
<evidence type="ECO:0000250" key="1"/>
<evidence type="ECO:0000250" key="2">
    <source>
        <dbReference type="UniProtKB" id="P06539"/>
    </source>
</evidence>
<evidence type="ECO:0000305" key="3"/>
<feature type="initiator methionine" description="Removed" evidence="1">
    <location>
        <position position="1"/>
    </location>
</feature>
<feature type="chain" id="PRO_0000199164" description="R-phycocyanin beta subunit">
    <location>
        <begin position="2"/>
        <end position="172"/>
    </location>
</feature>
<feature type="binding site" description="covalent" evidence="2">
    <location>
        <position position="82"/>
    </location>
    <ligand>
        <name>(2R,3E)-phycocyanobilin</name>
        <dbReference type="ChEBI" id="CHEBI:85275"/>
    </ligand>
</feature>
<feature type="binding site" description="covalent" evidence="2">
    <location>
        <position position="153"/>
    </location>
    <ligand>
        <name>(2R,3E)-phycoerythrobilin</name>
        <dbReference type="ChEBI" id="CHEBI:85276"/>
    </ligand>
</feature>
<feature type="modified residue" description="N4-methylasparagine" evidence="2">
    <location>
        <position position="72"/>
    </location>
</feature>
<gene>
    <name type="primary">rpcB</name>
    <name type="synonym">cpcB</name>
    <name type="ordered locus">SynWH7803_0480</name>
</gene>
<name>PHCB_SYNPW</name>
<keyword id="KW-0042">Antenna complex</keyword>
<keyword id="KW-0089">Bile pigment</keyword>
<keyword id="KW-0157">Chromophore</keyword>
<keyword id="KW-0249">Electron transport</keyword>
<keyword id="KW-0472">Membrane</keyword>
<keyword id="KW-0488">Methylation</keyword>
<keyword id="KW-0602">Photosynthesis</keyword>
<keyword id="KW-0605">Phycobilisome</keyword>
<keyword id="KW-1185">Reference proteome</keyword>
<keyword id="KW-0793">Thylakoid</keyword>
<keyword id="KW-0813">Transport</keyword>
<dbReference type="EMBL" id="X59809">
    <property type="protein sequence ID" value="CAA42479.1"/>
    <property type="molecule type" value="Genomic_DNA"/>
</dbReference>
<dbReference type="EMBL" id="CT971583">
    <property type="protein sequence ID" value="CAK22906.1"/>
    <property type="molecule type" value="Genomic_DNA"/>
</dbReference>
<dbReference type="PIR" id="S17734">
    <property type="entry name" value="CFYCB3"/>
</dbReference>
<dbReference type="SMR" id="P27289"/>
<dbReference type="STRING" id="32051.SynWH7803_0480"/>
<dbReference type="KEGG" id="syx:SynWH7803_0480"/>
<dbReference type="eggNOG" id="ENOG502Z7NE">
    <property type="taxonomic scope" value="Bacteria"/>
</dbReference>
<dbReference type="HOGENOM" id="CLU_104219_0_0_3"/>
<dbReference type="OrthoDB" id="512145at2"/>
<dbReference type="Proteomes" id="UP000001566">
    <property type="component" value="Chromosome"/>
</dbReference>
<dbReference type="GO" id="GO:0030089">
    <property type="term" value="C:phycobilisome"/>
    <property type="evidence" value="ECO:0007669"/>
    <property type="project" value="UniProtKB-KW"/>
</dbReference>
<dbReference type="GO" id="GO:0031676">
    <property type="term" value="C:plasma membrane-derived thylakoid membrane"/>
    <property type="evidence" value="ECO:0007669"/>
    <property type="project" value="UniProtKB-SubCell"/>
</dbReference>
<dbReference type="GO" id="GO:0015979">
    <property type="term" value="P:photosynthesis"/>
    <property type="evidence" value="ECO:0007669"/>
    <property type="project" value="UniProtKB-KW"/>
</dbReference>
<dbReference type="Gene3D" id="1.10.490.20">
    <property type="entry name" value="Phycocyanins"/>
    <property type="match status" value="1"/>
</dbReference>
<dbReference type="InterPro" id="IPR009050">
    <property type="entry name" value="Globin-like_sf"/>
</dbReference>
<dbReference type="InterPro" id="IPR012128">
    <property type="entry name" value="Phycobilisome_asu/bsu"/>
</dbReference>
<dbReference type="InterPro" id="IPR038719">
    <property type="entry name" value="Phycobilisome_asu/bsu_sf"/>
</dbReference>
<dbReference type="InterPro" id="IPR006247">
    <property type="entry name" value="Phycocyanin_b"/>
</dbReference>
<dbReference type="NCBIfam" id="TIGR01339">
    <property type="entry name" value="phycocy_beta"/>
    <property type="match status" value="1"/>
</dbReference>
<dbReference type="PANTHER" id="PTHR34011:SF7">
    <property type="entry name" value="C-PHYCOCYANIN BETA SUBUNIT"/>
    <property type="match status" value="1"/>
</dbReference>
<dbReference type="PANTHER" id="PTHR34011">
    <property type="entry name" value="PHYCOBILISOME 32.1 KDA LINKER POLYPEPTIDE, PHYCOCYANIN-ASSOCIATED, ROD 2-RELATED"/>
    <property type="match status" value="1"/>
</dbReference>
<dbReference type="Pfam" id="PF00502">
    <property type="entry name" value="Phycobilisome"/>
    <property type="match status" value="1"/>
</dbReference>
<dbReference type="PIRSF" id="PIRSF000081">
    <property type="entry name" value="Phycocyanin"/>
    <property type="match status" value="1"/>
</dbReference>
<dbReference type="SUPFAM" id="SSF46458">
    <property type="entry name" value="Globin-like"/>
    <property type="match status" value="1"/>
</dbReference>
<protein>
    <recommendedName>
        <fullName>R-phycocyanin beta subunit</fullName>
    </recommendedName>
</protein>
<organism>
    <name type="scientific">Synechococcus sp. (strain WH7803)</name>
    <dbReference type="NCBI Taxonomy" id="32051"/>
    <lineage>
        <taxon>Bacteria</taxon>
        <taxon>Bacillati</taxon>
        <taxon>Cyanobacteriota</taxon>
        <taxon>Cyanophyceae</taxon>
        <taxon>Synechococcales</taxon>
        <taxon>Synechococcaceae</taxon>
        <taxon>Synechococcus</taxon>
    </lineage>
</organism>